<feature type="chain" id="PRO_0000063518" description="Chaperonin GroEL">
    <location>
        <begin position="1"/>
        <end position="555"/>
    </location>
</feature>
<feature type="region of interest" description="Disordered" evidence="2">
    <location>
        <begin position="528"/>
        <end position="555"/>
    </location>
</feature>
<feature type="compositionally biased region" description="Gly residues" evidence="2">
    <location>
        <begin position="537"/>
        <end position="555"/>
    </location>
</feature>
<feature type="binding site" evidence="1">
    <location>
        <begin position="29"/>
        <end position="32"/>
    </location>
    <ligand>
        <name>ATP</name>
        <dbReference type="ChEBI" id="CHEBI:30616"/>
    </ligand>
</feature>
<feature type="binding site" evidence="1">
    <location>
        <position position="50"/>
    </location>
    <ligand>
        <name>ATP</name>
        <dbReference type="ChEBI" id="CHEBI:30616"/>
    </ligand>
</feature>
<feature type="binding site" evidence="1">
    <location>
        <begin position="86"/>
        <end position="90"/>
    </location>
    <ligand>
        <name>ATP</name>
        <dbReference type="ChEBI" id="CHEBI:30616"/>
    </ligand>
</feature>
<feature type="binding site" evidence="1">
    <location>
        <position position="418"/>
    </location>
    <ligand>
        <name>ATP</name>
        <dbReference type="ChEBI" id="CHEBI:30616"/>
    </ligand>
</feature>
<feature type="binding site" evidence="1">
    <location>
        <position position="499"/>
    </location>
    <ligand>
        <name>ATP</name>
        <dbReference type="ChEBI" id="CHEBI:30616"/>
    </ligand>
</feature>
<sequence length="555" mass="59729">MSKQIVHGDQCRKKIIEGINVVANAVGITLGPKGRCVAIEQSYGPPKITKDGVSVAKAIQLKDKSLNVGAQFVISVASKTADVAGDGTTTATVIADAAVRELNKAEVAGIDIQEVRKGAEKAVEAVIADVRKNSSPVKNEEEIAQVATVSSNGDREIGEKIANAMKQVGQEGVITVEDSKNFNFEVEVVKGMRFDRGYISQYFATNREKMITEFENPYILLLDQKVSTVQPLVPVLEAVAHTGKPLVLIADDVDGEALTALILNNLKGSIKVVAVKAPGFGDRKKEMLEDIAILTNGEVITEQLGIKLEKVNDTSKLGTANRVIVTKDHTTIVHDKNNSDIEKKVNSRCEQIREAIKDTTSDYEKEKLQERLAKLRNGVAVLKVGGATEVEQKERKDRVEDALHATRAAVEEGIVPGGGVALFYASRVLDSLKFDNEDQRVGINIIKKVLEAPVRQIVKNAGGKEDVVVNELSKSTDKNRGFDARTMQYVDMIKAGIVDPTKVVRTALQDAFSVASLVIATSAMITDHEEDNNTGNRSGGGVGGGHHGGMGGMDF</sequence>
<dbReference type="EC" id="5.6.1.7" evidence="1"/>
<dbReference type="EMBL" id="M31887">
    <property type="protein sequence ID" value="AAA26393.1"/>
    <property type="molecule type" value="Genomic_DNA"/>
</dbReference>
<dbReference type="PIR" id="B41492">
    <property type="entry name" value="B41492"/>
</dbReference>
<dbReference type="RefSeq" id="WP_045912467.1">
    <property type="nucleotide sequence ID" value="NZ_LS398548.1"/>
</dbReference>
<dbReference type="SMR" id="P16625"/>
<dbReference type="STRING" id="357244.OTBS_0917"/>
<dbReference type="GO" id="GO:0005737">
    <property type="term" value="C:cytoplasm"/>
    <property type="evidence" value="ECO:0007669"/>
    <property type="project" value="UniProtKB-SubCell"/>
</dbReference>
<dbReference type="GO" id="GO:0005524">
    <property type="term" value="F:ATP binding"/>
    <property type="evidence" value="ECO:0007669"/>
    <property type="project" value="UniProtKB-UniRule"/>
</dbReference>
<dbReference type="GO" id="GO:0140662">
    <property type="term" value="F:ATP-dependent protein folding chaperone"/>
    <property type="evidence" value="ECO:0007669"/>
    <property type="project" value="InterPro"/>
</dbReference>
<dbReference type="GO" id="GO:0016853">
    <property type="term" value="F:isomerase activity"/>
    <property type="evidence" value="ECO:0007669"/>
    <property type="project" value="UniProtKB-KW"/>
</dbReference>
<dbReference type="GO" id="GO:0051082">
    <property type="term" value="F:unfolded protein binding"/>
    <property type="evidence" value="ECO:0007669"/>
    <property type="project" value="UniProtKB-UniRule"/>
</dbReference>
<dbReference type="GO" id="GO:0042026">
    <property type="term" value="P:protein refolding"/>
    <property type="evidence" value="ECO:0007669"/>
    <property type="project" value="UniProtKB-UniRule"/>
</dbReference>
<dbReference type="CDD" id="cd03344">
    <property type="entry name" value="GroEL"/>
    <property type="match status" value="1"/>
</dbReference>
<dbReference type="FunFam" id="3.50.7.10:FF:000001">
    <property type="entry name" value="60 kDa chaperonin"/>
    <property type="match status" value="1"/>
</dbReference>
<dbReference type="Gene3D" id="3.50.7.10">
    <property type="entry name" value="GroEL"/>
    <property type="match status" value="1"/>
</dbReference>
<dbReference type="Gene3D" id="1.10.560.10">
    <property type="entry name" value="GroEL-like equatorial domain"/>
    <property type="match status" value="1"/>
</dbReference>
<dbReference type="Gene3D" id="3.30.260.10">
    <property type="entry name" value="TCP-1-like chaperonin intermediate domain"/>
    <property type="match status" value="1"/>
</dbReference>
<dbReference type="HAMAP" id="MF_00600">
    <property type="entry name" value="CH60"/>
    <property type="match status" value="1"/>
</dbReference>
<dbReference type="InterPro" id="IPR018370">
    <property type="entry name" value="Chaperonin_Cpn60_CS"/>
</dbReference>
<dbReference type="InterPro" id="IPR001844">
    <property type="entry name" value="Cpn60/GroEL"/>
</dbReference>
<dbReference type="InterPro" id="IPR002423">
    <property type="entry name" value="Cpn60/GroEL/TCP-1"/>
</dbReference>
<dbReference type="InterPro" id="IPR027409">
    <property type="entry name" value="GroEL-like_apical_dom_sf"/>
</dbReference>
<dbReference type="InterPro" id="IPR027413">
    <property type="entry name" value="GROEL-like_equatorial_sf"/>
</dbReference>
<dbReference type="InterPro" id="IPR027410">
    <property type="entry name" value="TCP-1-like_intermed_sf"/>
</dbReference>
<dbReference type="NCBIfam" id="TIGR02348">
    <property type="entry name" value="GroEL"/>
    <property type="match status" value="1"/>
</dbReference>
<dbReference type="NCBIfam" id="NF000592">
    <property type="entry name" value="PRK00013.1"/>
    <property type="match status" value="1"/>
</dbReference>
<dbReference type="NCBIfam" id="NF009487">
    <property type="entry name" value="PRK12849.1"/>
    <property type="match status" value="1"/>
</dbReference>
<dbReference type="NCBIfam" id="NF009488">
    <property type="entry name" value="PRK12850.1"/>
    <property type="match status" value="1"/>
</dbReference>
<dbReference type="NCBIfam" id="NF009489">
    <property type="entry name" value="PRK12851.1"/>
    <property type="match status" value="1"/>
</dbReference>
<dbReference type="PANTHER" id="PTHR45633">
    <property type="entry name" value="60 KDA HEAT SHOCK PROTEIN, MITOCHONDRIAL"/>
    <property type="match status" value="1"/>
</dbReference>
<dbReference type="Pfam" id="PF00118">
    <property type="entry name" value="Cpn60_TCP1"/>
    <property type="match status" value="1"/>
</dbReference>
<dbReference type="PRINTS" id="PR00298">
    <property type="entry name" value="CHAPERONIN60"/>
</dbReference>
<dbReference type="SUPFAM" id="SSF52029">
    <property type="entry name" value="GroEL apical domain-like"/>
    <property type="match status" value="1"/>
</dbReference>
<dbReference type="SUPFAM" id="SSF48592">
    <property type="entry name" value="GroEL equatorial domain-like"/>
    <property type="match status" value="1"/>
</dbReference>
<dbReference type="SUPFAM" id="SSF54849">
    <property type="entry name" value="GroEL-intermediate domain like"/>
    <property type="match status" value="1"/>
</dbReference>
<dbReference type="PROSITE" id="PS00296">
    <property type="entry name" value="CHAPERONINS_CPN60"/>
    <property type="match status" value="1"/>
</dbReference>
<organism>
    <name type="scientific">Orientia tsutsugamushi</name>
    <name type="common">Rickettsia tsutsugamushi</name>
    <dbReference type="NCBI Taxonomy" id="784"/>
    <lineage>
        <taxon>Bacteria</taxon>
        <taxon>Pseudomonadati</taxon>
        <taxon>Pseudomonadota</taxon>
        <taxon>Alphaproteobacteria</taxon>
        <taxon>Rickettsiales</taxon>
        <taxon>Rickettsiaceae</taxon>
        <taxon>Rickettsieae</taxon>
        <taxon>Orientia</taxon>
    </lineage>
</organism>
<name>CH60_ORITS</name>
<accession>P16625</accession>
<comment type="function">
    <text evidence="1">Together with its co-chaperonin GroES, plays an essential role in assisting protein folding. The GroEL-GroES system forms a nano-cage that allows encapsulation of the non-native substrate proteins and provides a physical environment optimized to promote and accelerate protein folding.</text>
</comment>
<comment type="catalytic activity">
    <reaction evidence="1">
        <text>ATP + H2O + a folded polypeptide = ADP + phosphate + an unfolded polypeptide.</text>
        <dbReference type="EC" id="5.6.1.7"/>
    </reaction>
</comment>
<comment type="subunit">
    <text evidence="1">Forms a cylinder of 14 subunits composed of two heptameric rings stacked back-to-back. Interacts with the co-chaperonin GroES.</text>
</comment>
<comment type="subcellular location">
    <subcellularLocation>
        <location evidence="1">Cytoplasm</location>
    </subcellularLocation>
</comment>
<comment type="similarity">
    <text evidence="1">Belongs to the chaperonin (HSP60) family.</text>
</comment>
<keyword id="KW-0067">ATP-binding</keyword>
<keyword id="KW-0143">Chaperone</keyword>
<keyword id="KW-0963">Cytoplasm</keyword>
<keyword id="KW-0413">Isomerase</keyword>
<keyword id="KW-0547">Nucleotide-binding</keyword>
<gene>
    <name evidence="1" type="primary">groEL</name>
    <name evidence="1" type="synonym">groL</name>
    <name type="synonym">mopA</name>
    <name type="synonym">sta58</name>
</gene>
<evidence type="ECO:0000255" key="1">
    <source>
        <dbReference type="HAMAP-Rule" id="MF_00600"/>
    </source>
</evidence>
<evidence type="ECO:0000256" key="2">
    <source>
        <dbReference type="SAM" id="MobiDB-lite"/>
    </source>
</evidence>
<proteinExistence type="inferred from homology"/>
<protein>
    <recommendedName>
        <fullName evidence="1">Chaperonin GroEL</fullName>
        <ecNumber evidence="1">5.6.1.7</ecNumber>
    </recommendedName>
    <alternativeName>
        <fullName>58 kDa antigen</fullName>
    </alternativeName>
    <alternativeName>
        <fullName evidence="1">60 kDa chaperonin</fullName>
    </alternativeName>
    <alternativeName>
        <fullName evidence="1">Chaperonin-60</fullName>
        <shortName evidence="1">Cpn60</shortName>
    </alternativeName>
    <alternativeName>
        <fullName>Major antigen 58</fullName>
    </alternativeName>
</protein>
<reference key="1">
    <citation type="journal article" date="1990" name="Infect. Immun.">
        <title>Molecular cloning and sequence analysis of the Sta58 major antigen gene of Rickettsia tsutsugamushi: sequence homology and antigenic comparison of Sta58 to the 60-kilodalton family of stress proteins.</title>
        <authorList>
            <person name="Stover C.K."/>
            <person name="Marana D.P."/>
            <person name="Dasch G.A."/>
            <person name="Oaks E.V."/>
        </authorList>
    </citation>
    <scope>NUCLEOTIDE SEQUENCE [GENOMIC DNA]</scope>
    <source>
        <strain>Karp</strain>
    </source>
</reference>